<protein>
    <recommendedName>
        <fullName evidence="1">Triosephosphate isomerase 1</fullName>
        <shortName evidence="1">TIM 1</shortName>
        <shortName evidence="1">TPI 1</shortName>
        <ecNumber evidence="1">5.3.1.1</ecNumber>
    </recommendedName>
    <alternativeName>
        <fullName evidence="1">Triose-phosphate isomerase 1</fullName>
    </alternativeName>
</protein>
<keyword id="KW-0963">Cytoplasm</keyword>
<keyword id="KW-0312">Gluconeogenesis</keyword>
<keyword id="KW-0324">Glycolysis</keyword>
<keyword id="KW-0413">Isomerase</keyword>
<feature type="chain" id="PRO_0000090238" description="Triosephosphate isomerase 1">
    <location>
        <begin position="1"/>
        <end position="251"/>
    </location>
</feature>
<feature type="active site" description="Electrophile" evidence="1">
    <location>
        <position position="95"/>
    </location>
</feature>
<feature type="active site" description="Proton acceptor" evidence="1">
    <location>
        <position position="167"/>
    </location>
</feature>
<feature type="binding site" evidence="1">
    <location>
        <begin position="9"/>
        <end position="11"/>
    </location>
    <ligand>
        <name>substrate</name>
    </ligand>
</feature>
<feature type="binding site" evidence="1">
    <location>
        <position position="173"/>
    </location>
    <ligand>
        <name>substrate</name>
    </ligand>
</feature>
<feature type="binding site" evidence="1">
    <location>
        <position position="213"/>
    </location>
    <ligand>
        <name>substrate</name>
    </ligand>
</feature>
<feature type="binding site" evidence="1">
    <location>
        <begin position="234"/>
        <end position="235"/>
    </location>
    <ligand>
        <name>substrate</name>
    </ligand>
</feature>
<accession>Q928I1</accession>
<name>TPIS1_LISIN</name>
<evidence type="ECO:0000255" key="1">
    <source>
        <dbReference type="HAMAP-Rule" id="MF_00147"/>
    </source>
</evidence>
<sequence length="251" mass="26861">MRKPIIAGNWKMNKTAAKAGQFAEDVKNNVPSSDAVESVVAAPALFLQELVRLTEGTNLRVAAQNCYFEDEGAFTGEISPFALADLGVSYVIIGHSERREYFHETDEDINKKAHAIFKHGMTPIICCGETLDQREAGQTDTWVRGQIRAALAGLTEEQVIKSVIAYEPIWAIGTGKSSTSADANETCAVIRAEVADAVSQKAADAVRIQYGGSVKPENIADYLAESDIDGALVGGASLEPASFLALLEAVK</sequence>
<gene>
    <name evidence="1" type="primary">tpiA1</name>
    <name type="synonym">tpi</name>
    <name type="ordered locus">lin2551</name>
</gene>
<organism>
    <name type="scientific">Listeria innocua serovar 6a (strain ATCC BAA-680 / CLIP 11262)</name>
    <dbReference type="NCBI Taxonomy" id="272626"/>
    <lineage>
        <taxon>Bacteria</taxon>
        <taxon>Bacillati</taxon>
        <taxon>Bacillota</taxon>
        <taxon>Bacilli</taxon>
        <taxon>Bacillales</taxon>
        <taxon>Listeriaceae</taxon>
        <taxon>Listeria</taxon>
    </lineage>
</organism>
<dbReference type="EC" id="5.3.1.1" evidence="1"/>
<dbReference type="EMBL" id="AL596172">
    <property type="protein sequence ID" value="CAC97778.1"/>
    <property type="molecule type" value="Genomic_DNA"/>
</dbReference>
<dbReference type="PIR" id="AB1751">
    <property type="entry name" value="AB1751"/>
</dbReference>
<dbReference type="SMR" id="Q928I1"/>
<dbReference type="STRING" id="272626.gene:17566931"/>
<dbReference type="KEGG" id="lin:tpi"/>
<dbReference type="eggNOG" id="COG0149">
    <property type="taxonomic scope" value="Bacteria"/>
</dbReference>
<dbReference type="HOGENOM" id="CLU_024251_2_3_9"/>
<dbReference type="OrthoDB" id="9809429at2"/>
<dbReference type="UniPathway" id="UPA00109">
    <property type="reaction ID" value="UER00189"/>
</dbReference>
<dbReference type="UniPathway" id="UPA00138"/>
<dbReference type="Proteomes" id="UP000002513">
    <property type="component" value="Chromosome"/>
</dbReference>
<dbReference type="GO" id="GO:0005829">
    <property type="term" value="C:cytosol"/>
    <property type="evidence" value="ECO:0007669"/>
    <property type="project" value="TreeGrafter"/>
</dbReference>
<dbReference type="GO" id="GO:0004807">
    <property type="term" value="F:triose-phosphate isomerase activity"/>
    <property type="evidence" value="ECO:0007669"/>
    <property type="project" value="UniProtKB-UniRule"/>
</dbReference>
<dbReference type="GO" id="GO:0006094">
    <property type="term" value="P:gluconeogenesis"/>
    <property type="evidence" value="ECO:0007669"/>
    <property type="project" value="UniProtKB-UniRule"/>
</dbReference>
<dbReference type="GO" id="GO:0046166">
    <property type="term" value="P:glyceraldehyde-3-phosphate biosynthetic process"/>
    <property type="evidence" value="ECO:0007669"/>
    <property type="project" value="TreeGrafter"/>
</dbReference>
<dbReference type="GO" id="GO:0019563">
    <property type="term" value="P:glycerol catabolic process"/>
    <property type="evidence" value="ECO:0007669"/>
    <property type="project" value="TreeGrafter"/>
</dbReference>
<dbReference type="GO" id="GO:0006096">
    <property type="term" value="P:glycolytic process"/>
    <property type="evidence" value="ECO:0007669"/>
    <property type="project" value="UniProtKB-UniRule"/>
</dbReference>
<dbReference type="CDD" id="cd00311">
    <property type="entry name" value="TIM"/>
    <property type="match status" value="1"/>
</dbReference>
<dbReference type="FunFam" id="3.20.20.70:FF:000016">
    <property type="entry name" value="Triosephosphate isomerase"/>
    <property type="match status" value="1"/>
</dbReference>
<dbReference type="Gene3D" id="3.20.20.70">
    <property type="entry name" value="Aldolase class I"/>
    <property type="match status" value="1"/>
</dbReference>
<dbReference type="HAMAP" id="MF_00147_B">
    <property type="entry name" value="TIM_B"/>
    <property type="match status" value="1"/>
</dbReference>
<dbReference type="InterPro" id="IPR013785">
    <property type="entry name" value="Aldolase_TIM"/>
</dbReference>
<dbReference type="InterPro" id="IPR035990">
    <property type="entry name" value="TIM_sf"/>
</dbReference>
<dbReference type="InterPro" id="IPR022896">
    <property type="entry name" value="TrioseP_Isoase_bac/euk"/>
</dbReference>
<dbReference type="InterPro" id="IPR000652">
    <property type="entry name" value="Triosephosphate_isomerase"/>
</dbReference>
<dbReference type="InterPro" id="IPR020861">
    <property type="entry name" value="Triosephosphate_isomerase_AS"/>
</dbReference>
<dbReference type="NCBIfam" id="TIGR00419">
    <property type="entry name" value="tim"/>
    <property type="match status" value="1"/>
</dbReference>
<dbReference type="PANTHER" id="PTHR21139">
    <property type="entry name" value="TRIOSEPHOSPHATE ISOMERASE"/>
    <property type="match status" value="1"/>
</dbReference>
<dbReference type="PANTHER" id="PTHR21139:SF42">
    <property type="entry name" value="TRIOSEPHOSPHATE ISOMERASE"/>
    <property type="match status" value="1"/>
</dbReference>
<dbReference type="Pfam" id="PF00121">
    <property type="entry name" value="TIM"/>
    <property type="match status" value="1"/>
</dbReference>
<dbReference type="SUPFAM" id="SSF51351">
    <property type="entry name" value="Triosephosphate isomerase (TIM)"/>
    <property type="match status" value="1"/>
</dbReference>
<dbReference type="PROSITE" id="PS00171">
    <property type="entry name" value="TIM_1"/>
    <property type="match status" value="1"/>
</dbReference>
<dbReference type="PROSITE" id="PS51440">
    <property type="entry name" value="TIM_2"/>
    <property type="match status" value="1"/>
</dbReference>
<comment type="function">
    <text evidence="1">Involved in the gluconeogenesis. Catalyzes stereospecifically the conversion of dihydroxyacetone phosphate (DHAP) to D-glyceraldehyde-3-phosphate (G3P).</text>
</comment>
<comment type="catalytic activity">
    <reaction evidence="1">
        <text>D-glyceraldehyde 3-phosphate = dihydroxyacetone phosphate</text>
        <dbReference type="Rhea" id="RHEA:18585"/>
        <dbReference type="ChEBI" id="CHEBI:57642"/>
        <dbReference type="ChEBI" id="CHEBI:59776"/>
        <dbReference type="EC" id="5.3.1.1"/>
    </reaction>
</comment>
<comment type="pathway">
    <text evidence="1">Carbohydrate biosynthesis; gluconeogenesis.</text>
</comment>
<comment type="pathway">
    <text evidence="1">Carbohydrate degradation; glycolysis; D-glyceraldehyde 3-phosphate from glycerone phosphate: step 1/1.</text>
</comment>
<comment type="subunit">
    <text evidence="1">Homodimer.</text>
</comment>
<comment type="subcellular location">
    <subcellularLocation>
        <location evidence="1">Cytoplasm</location>
    </subcellularLocation>
</comment>
<comment type="similarity">
    <text evidence="1">Belongs to the triosephosphate isomerase family.</text>
</comment>
<reference key="1">
    <citation type="journal article" date="2001" name="Science">
        <title>Comparative genomics of Listeria species.</title>
        <authorList>
            <person name="Glaser P."/>
            <person name="Frangeul L."/>
            <person name="Buchrieser C."/>
            <person name="Rusniok C."/>
            <person name="Amend A."/>
            <person name="Baquero F."/>
            <person name="Berche P."/>
            <person name="Bloecker H."/>
            <person name="Brandt P."/>
            <person name="Chakraborty T."/>
            <person name="Charbit A."/>
            <person name="Chetouani F."/>
            <person name="Couve E."/>
            <person name="de Daruvar A."/>
            <person name="Dehoux P."/>
            <person name="Domann E."/>
            <person name="Dominguez-Bernal G."/>
            <person name="Duchaud E."/>
            <person name="Durant L."/>
            <person name="Dussurget O."/>
            <person name="Entian K.-D."/>
            <person name="Fsihi H."/>
            <person name="Garcia-del Portillo F."/>
            <person name="Garrido P."/>
            <person name="Gautier L."/>
            <person name="Goebel W."/>
            <person name="Gomez-Lopez N."/>
            <person name="Hain T."/>
            <person name="Hauf J."/>
            <person name="Jackson D."/>
            <person name="Jones L.-M."/>
            <person name="Kaerst U."/>
            <person name="Kreft J."/>
            <person name="Kuhn M."/>
            <person name="Kunst F."/>
            <person name="Kurapkat G."/>
            <person name="Madueno E."/>
            <person name="Maitournam A."/>
            <person name="Mata Vicente J."/>
            <person name="Ng E."/>
            <person name="Nedjari H."/>
            <person name="Nordsiek G."/>
            <person name="Novella S."/>
            <person name="de Pablos B."/>
            <person name="Perez-Diaz J.-C."/>
            <person name="Purcell R."/>
            <person name="Remmel B."/>
            <person name="Rose M."/>
            <person name="Schlueter T."/>
            <person name="Simoes N."/>
            <person name="Tierrez A."/>
            <person name="Vazquez-Boland J.-A."/>
            <person name="Voss H."/>
            <person name="Wehland J."/>
            <person name="Cossart P."/>
        </authorList>
    </citation>
    <scope>NUCLEOTIDE SEQUENCE [LARGE SCALE GENOMIC DNA]</scope>
    <source>
        <strain>ATCC BAA-680 / CLIP 11262</strain>
    </source>
</reference>
<proteinExistence type="inferred from homology"/>